<comment type="function">
    <text evidence="2 6">Polyglutamylase which modifies tubulin, generating polyglutamate side chains of variable lengths on the gamma-carboxyl group of specific glutamate residues within the C-terminal tail of tubulin. Preferentially mediates ATP-dependent polyglutamate long side-chain elongation over the initiation step of the polyglutamylation reaction. Preferentially modifies the alpha-tubulin tail over a beta-tail (By similarity). Required for CCSAP localization to both spindle and cilia microtubules (PubMed:22493317). Promotes tubulin polyglutamylation which stimulates spastin/SPAST-mediated microtubule severing, thereby regulating microtubule functions (By similarity).</text>
</comment>
<comment type="catalytic activity">
    <reaction evidence="2">
        <text>L-glutamyl-[protein] + L-glutamate + ATP = gamma-L-glutamyl-L-glutamyl-[protein] + ADP + phosphate + H(+)</text>
        <dbReference type="Rhea" id="RHEA:60144"/>
        <dbReference type="Rhea" id="RHEA-COMP:10208"/>
        <dbReference type="Rhea" id="RHEA-COMP:15517"/>
        <dbReference type="ChEBI" id="CHEBI:15378"/>
        <dbReference type="ChEBI" id="CHEBI:29973"/>
        <dbReference type="ChEBI" id="CHEBI:29985"/>
        <dbReference type="ChEBI" id="CHEBI:30616"/>
        <dbReference type="ChEBI" id="CHEBI:43474"/>
        <dbReference type="ChEBI" id="CHEBI:143622"/>
        <dbReference type="ChEBI" id="CHEBI:456216"/>
    </reaction>
    <physiologicalReaction direction="left-to-right" evidence="2">
        <dbReference type="Rhea" id="RHEA:60145"/>
    </physiologicalReaction>
</comment>
<comment type="catalytic activity">
    <reaction evidence="2">
        <text>(L-glutamyl)(n)-gamma-L-glutamyl-L-glutamyl-[protein] + L-glutamate + ATP = (L-glutamyl)(n+1)-gamma-L-glutamyl-L-glutamyl-[protein] + ADP + phosphate + H(+)</text>
        <dbReference type="Rhea" id="RHEA:60148"/>
        <dbReference type="Rhea" id="RHEA-COMP:15519"/>
        <dbReference type="Rhea" id="RHEA-COMP:15675"/>
        <dbReference type="ChEBI" id="CHEBI:15378"/>
        <dbReference type="ChEBI" id="CHEBI:29985"/>
        <dbReference type="ChEBI" id="CHEBI:30616"/>
        <dbReference type="ChEBI" id="CHEBI:43474"/>
        <dbReference type="ChEBI" id="CHEBI:143623"/>
        <dbReference type="ChEBI" id="CHEBI:456216"/>
    </reaction>
    <physiologicalReaction direction="left-to-right" evidence="2">
        <dbReference type="Rhea" id="RHEA:60149"/>
    </physiologicalReaction>
</comment>
<comment type="cofactor">
    <cofactor evidence="1">
        <name>Mg(2+)</name>
        <dbReference type="ChEBI" id="CHEBI:18420"/>
    </cofactor>
</comment>
<comment type="subcellular location">
    <subcellularLocation>
        <location evidence="2">Cytoplasm</location>
        <location evidence="2">Cytoskeleton</location>
        <location evidence="2">Cilium basal body</location>
    </subcellularLocation>
    <subcellularLocation>
        <location evidence="2">Cytoplasm</location>
        <location evidence="2">Cytoskeleton</location>
    </subcellularLocation>
</comment>
<comment type="alternative products">
    <event type="alternative splicing"/>
    <isoform>
        <id>Q8NHH1-1</id>
        <name>1</name>
        <sequence type="displayed"/>
    </isoform>
    <isoform>
        <id>Q8NHH1-2</id>
        <name>2</name>
        <sequence type="described" ref="VSP_057853 VSP_057854"/>
    </isoform>
</comment>
<comment type="domain">
    <text evidence="3 7">The flexible c-MTBD (cationic microtubule binding domain) region mediates binding to microtubules. It is positively charged and becomes ordered when bound to microtubules: it interacts with a negatively charged patch on tubulin. The presence of positive charges in the c-MTBD region is essential for proper binding.</text>
</comment>
<comment type="domain">
    <text evidence="1">Gln-345 is the main determinant for regioselectivity, which segregates between initiases and elongases in all tubulin--tyrosine ligase family. A glutamine residue at this position is found in elongases TTLL6, TTLL9, TTLL11, TTLL13, TTLL10 and favors glutamate-chain elongation, whereas an arginine residue is found in initiases TTLL2, TTLL4, TTLL5, TTLL3, TTLL8 and favors initiation.</text>
</comment>
<comment type="similarity">
    <text evidence="8">Belongs to the tubulin--tyrosine ligase family.</text>
</comment>
<comment type="sequence caution" evidence="8">
    <conflict type="erroneous initiation">
        <sequence resource="EMBL-CDS" id="AAM81328"/>
    </conflict>
    <text>Extended N-terminus.</text>
</comment>
<keyword id="KW-0025">Alternative splicing</keyword>
<keyword id="KW-0067">ATP-binding</keyword>
<keyword id="KW-0966">Cell projection</keyword>
<keyword id="KW-0969">Cilium</keyword>
<keyword id="KW-0963">Cytoplasm</keyword>
<keyword id="KW-0206">Cytoskeleton</keyword>
<keyword id="KW-0436">Ligase</keyword>
<keyword id="KW-0460">Magnesium</keyword>
<keyword id="KW-0479">Metal-binding</keyword>
<keyword id="KW-0493">Microtubule</keyword>
<keyword id="KW-0547">Nucleotide-binding</keyword>
<keyword id="KW-1267">Proteomics identification</keyword>
<keyword id="KW-1185">Reference proteome</keyword>
<organism>
    <name type="scientific">Homo sapiens</name>
    <name type="common">Human</name>
    <dbReference type="NCBI Taxonomy" id="9606"/>
    <lineage>
        <taxon>Eukaryota</taxon>
        <taxon>Metazoa</taxon>
        <taxon>Chordata</taxon>
        <taxon>Craniata</taxon>
        <taxon>Vertebrata</taxon>
        <taxon>Euteleostomi</taxon>
        <taxon>Mammalia</taxon>
        <taxon>Eutheria</taxon>
        <taxon>Euarchontoglires</taxon>
        <taxon>Primates</taxon>
        <taxon>Haplorrhini</taxon>
        <taxon>Catarrhini</taxon>
        <taxon>Hominidae</taxon>
        <taxon>Homo</taxon>
    </lineage>
</organism>
<sequence>MRRGSSESELAARWEAEAVAAAKAAAKAEAEATAETVAEQVRVDAGAAGEPECKAGEEQPKVLAPAPAQPSAAEEGNTQVLQRPPPTLPPSKPKPVQGLCPHGKPRDKGRSCKRSSGHGSGENGSQRPVTVDSSKARTSLDALKISIRQLKWKEFPFGRRLPCDIYWHGVSFHDNDIFSGQVNKFPGMTEMVRKITLSRAVRTMQNLFPEEYNFYPRSWILPDEFQLFVAQVQMVKDDDPSWKPTFIVKPDGGCQGDGIYLIKDPSDIRLAGTLQSRPAVVQEYICKPLLIDKLKFDIRLYVLLKSLDPLEIYIAKDGLSRFCTEPYQEPTPKNLHRIFMHLTNYSLNIHSGNFIHSDSASTGSKRTFSSILCRLSSKGVDIKKVWSDIISVVIKTVIALTPELKVFYQSDIPTGRPGPTCFQILGFDILLMKNLKPILLEVNANPSMRIEHEHELSPGVFENVPSLVDEEVKVAVIRDTLRLMDPLKKKRENQSQQLEKPFAGKEDALDGELTSAPDCNANPEAHLPSICLKQVFPKYAKQFNYLRLVDRMANLFIRFLGIKGTMKLGPTGFRTFIRSCKLSSSSLSMAAVDILYIDITRRWNSMTLDQRDSGMCLQAFVEAFFFLAQRKFKMLPLHEQVASLIDLCEYHLSLLDEKRLVCGRGVPSGGRPPHRGPPQEPSPSAQPAGDNPPPRTSCANKLSHPRHTLS</sequence>
<gene>
    <name evidence="9" type="primary">TTLL11</name>
    <name type="synonym">C9orf20</name>
</gene>
<dbReference type="EC" id="6.3.2.-" evidence="2"/>
<dbReference type="EMBL" id="AF521886">
    <property type="protein sequence ID" value="AAM81328.1"/>
    <property type="status" value="ALT_INIT"/>
    <property type="molecule type" value="mRNA"/>
</dbReference>
<dbReference type="EMBL" id="AL162423">
    <property type="status" value="NOT_ANNOTATED_CDS"/>
    <property type="molecule type" value="Genomic_DNA"/>
</dbReference>
<dbReference type="EMBL" id="AL442634">
    <property type="status" value="NOT_ANNOTATED_CDS"/>
    <property type="molecule type" value="Genomic_DNA"/>
</dbReference>
<dbReference type="EMBL" id="AL445587">
    <property type="status" value="NOT_ANNOTATED_CDS"/>
    <property type="molecule type" value="Genomic_DNA"/>
</dbReference>
<dbReference type="EMBL" id="AL596244">
    <property type="status" value="NOT_ANNOTATED_CDS"/>
    <property type="molecule type" value="Genomic_DNA"/>
</dbReference>
<dbReference type="CCDS" id="CCDS48012.2">
    <molecule id="Q8NHH1-1"/>
</dbReference>
<dbReference type="CCDS" id="CCDS6834.3">
    <molecule id="Q8NHH1-2"/>
</dbReference>
<dbReference type="RefSeq" id="NP_001132914.2">
    <molecule id="Q8NHH1-1"/>
    <property type="nucleotide sequence ID" value="NM_001139442.2"/>
</dbReference>
<dbReference type="RefSeq" id="NP_919228.3">
    <molecule id="Q8NHH1-2"/>
    <property type="nucleotide sequence ID" value="NM_194252.3"/>
</dbReference>
<dbReference type="SMR" id="Q8NHH1"/>
<dbReference type="BioGRID" id="127650">
    <property type="interactions" value="7"/>
</dbReference>
<dbReference type="FunCoup" id="Q8NHH1">
    <property type="interactions" value="124"/>
</dbReference>
<dbReference type="IntAct" id="Q8NHH1">
    <property type="interactions" value="3"/>
</dbReference>
<dbReference type="MINT" id="Q8NHH1"/>
<dbReference type="STRING" id="9606.ENSP00000321346"/>
<dbReference type="iPTMnet" id="Q8NHH1"/>
<dbReference type="PhosphoSitePlus" id="Q8NHH1"/>
<dbReference type="BioMuta" id="TTLL11"/>
<dbReference type="DMDM" id="73920150"/>
<dbReference type="jPOST" id="Q8NHH1"/>
<dbReference type="MassIVE" id="Q8NHH1"/>
<dbReference type="PaxDb" id="9606-ENSP00000321346"/>
<dbReference type="PeptideAtlas" id="Q8NHH1"/>
<dbReference type="ProteomicsDB" id="29811"/>
<dbReference type="ProteomicsDB" id="73708"/>
<dbReference type="Antibodypedia" id="53016">
    <property type="antibodies" value="16 antibodies from 8 providers"/>
</dbReference>
<dbReference type="DNASU" id="158135"/>
<dbReference type="Ensembl" id="ENST00000321582.11">
    <molecule id="Q8NHH1-1"/>
    <property type="protein sequence ID" value="ENSP00000321346.6"/>
    <property type="gene ID" value="ENSG00000175764.17"/>
</dbReference>
<dbReference type="Ensembl" id="ENST00000373776.5">
    <molecule id="Q8NHH1-2"/>
    <property type="protein sequence ID" value="ENSP00000362881.4"/>
    <property type="gene ID" value="ENSG00000175764.17"/>
</dbReference>
<dbReference type="GeneID" id="158135"/>
<dbReference type="KEGG" id="hsa:158135"/>
<dbReference type="MANE-Select" id="ENST00000321582.11">
    <property type="protein sequence ID" value="ENSP00000321346.6"/>
    <property type="RefSeq nucleotide sequence ID" value="NM_001139442.2"/>
    <property type="RefSeq protein sequence ID" value="NP_001132914.2"/>
</dbReference>
<dbReference type="UCSC" id="uc004blt.2">
    <molecule id="Q8NHH1-1"/>
    <property type="organism name" value="human"/>
</dbReference>
<dbReference type="UCSC" id="uc011lyl.3">
    <property type="organism name" value="human"/>
</dbReference>
<dbReference type="AGR" id="HGNC:18113"/>
<dbReference type="CTD" id="158135"/>
<dbReference type="DisGeNET" id="158135"/>
<dbReference type="GeneCards" id="TTLL11"/>
<dbReference type="HGNC" id="HGNC:18113">
    <property type="gene designation" value="TTLL11"/>
</dbReference>
<dbReference type="HPA" id="ENSG00000175764">
    <property type="expression patterns" value="Tissue enhanced (skeletal)"/>
</dbReference>
<dbReference type="MIM" id="620694">
    <property type="type" value="gene"/>
</dbReference>
<dbReference type="neXtProt" id="NX_Q8NHH1"/>
<dbReference type="OpenTargets" id="ENSG00000175764"/>
<dbReference type="PharmGKB" id="PA25977"/>
<dbReference type="VEuPathDB" id="HostDB:ENSG00000175764"/>
<dbReference type="eggNOG" id="KOG2158">
    <property type="taxonomic scope" value="Eukaryota"/>
</dbReference>
<dbReference type="GeneTree" id="ENSGT00940000156689"/>
<dbReference type="HOGENOM" id="CLU_532730_0_0_1"/>
<dbReference type="InParanoid" id="Q8NHH1"/>
<dbReference type="OrthoDB" id="202825at2759"/>
<dbReference type="PAN-GO" id="Q8NHH1">
    <property type="GO annotations" value="5 GO annotations based on evolutionary models"/>
</dbReference>
<dbReference type="PhylomeDB" id="Q8NHH1"/>
<dbReference type="TreeFam" id="TF313087"/>
<dbReference type="PathwayCommons" id="Q8NHH1"/>
<dbReference type="Reactome" id="R-HSA-8955332">
    <property type="pathway name" value="Carboxyterminal post-translational modifications of tubulin"/>
</dbReference>
<dbReference type="SignaLink" id="Q8NHH1"/>
<dbReference type="BioGRID-ORCS" id="158135">
    <property type="hits" value="8 hits in 1155 CRISPR screens"/>
</dbReference>
<dbReference type="ChiTaRS" id="TTLL11">
    <property type="organism name" value="human"/>
</dbReference>
<dbReference type="GenomeRNAi" id="158135"/>
<dbReference type="Pharos" id="Q8NHH1">
    <property type="development level" value="Tdark"/>
</dbReference>
<dbReference type="PRO" id="PR:Q8NHH1"/>
<dbReference type="Proteomes" id="UP000005640">
    <property type="component" value="Chromosome 9"/>
</dbReference>
<dbReference type="RNAct" id="Q8NHH1">
    <property type="molecule type" value="protein"/>
</dbReference>
<dbReference type="Bgee" id="ENSG00000175764">
    <property type="expression patterns" value="Expressed in C1 segment of cervical spinal cord and 111 other cell types or tissues"/>
</dbReference>
<dbReference type="ExpressionAtlas" id="Q8NHH1">
    <property type="expression patterns" value="baseline and differential"/>
</dbReference>
<dbReference type="GO" id="GO:0036064">
    <property type="term" value="C:ciliary basal body"/>
    <property type="evidence" value="ECO:0000318"/>
    <property type="project" value="GO_Central"/>
</dbReference>
<dbReference type="GO" id="GO:0005829">
    <property type="term" value="C:cytosol"/>
    <property type="evidence" value="ECO:0000304"/>
    <property type="project" value="Reactome"/>
</dbReference>
<dbReference type="GO" id="GO:0005874">
    <property type="term" value="C:microtubule"/>
    <property type="evidence" value="ECO:0007669"/>
    <property type="project" value="UniProtKB-KW"/>
</dbReference>
<dbReference type="GO" id="GO:0005524">
    <property type="term" value="F:ATP binding"/>
    <property type="evidence" value="ECO:0007669"/>
    <property type="project" value="UniProtKB-KW"/>
</dbReference>
<dbReference type="GO" id="GO:0046872">
    <property type="term" value="F:metal ion binding"/>
    <property type="evidence" value="ECO:0007669"/>
    <property type="project" value="UniProtKB-KW"/>
</dbReference>
<dbReference type="GO" id="GO:0106438">
    <property type="term" value="F:protein-glutamic acid ligase activity, elongating"/>
    <property type="evidence" value="ECO:0007669"/>
    <property type="project" value="RHEA"/>
</dbReference>
<dbReference type="GO" id="GO:0106437">
    <property type="term" value="F:protein-glutamic acid ligase activity, initiating"/>
    <property type="evidence" value="ECO:0007669"/>
    <property type="project" value="RHEA"/>
</dbReference>
<dbReference type="GO" id="GO:0015631">
    <property type="term" value="F:tubulin binding"/>
    <property type="evidence" value="ECO:0000318"/>
    <property type="project" value="GO_Central"/>
</dbReference>
<dbReference type="GO" id="GO:0070740">
    <property type="term" value="F:tubulin-glutamic acid ligase activity"/>
    <property type="evidence" value="ECO:0000250"/>
    <property type="project" value="UniProtKB"/>
</dbReference>
<dbReference type="GO" id="GO:0000226">
    <property type="term" value="P:microtubule cytoskeleton organization"/>
    <property type="evidence" value="ECO:0000318"/>
    <property type="project" value="GO_Central"/>
</dbReference>
<dbReference type="GO" id="GO:0051013">
    <property type="term" value="P:microtubule severing"/>
    <property type="evidence" value="ECO:0007669"/>
    <property type="project" value="Ensembl"/>
</dbReference>
<dbReference type="GO" id="GO:0036211">
    <property type="term" value="P:protein modification process"/>
    <property type="evidence" value="ECO:0007669"/>
    <property type="project" value="InterPro"/>
</dbReference>
<dbReference type="FunFam" id="3.30.470.20:FF:000044">
    <property type="entry name" value="tubulin polyglutamylase TTLL11 isoform X2"/>
    <property type="match status" value="1"/>
</dbReference>
<dbReference type="Gene3D" id="3.30.470.20">
    <property type="entry name" value="ATP-grasp fold, B domain"/>
    <property type="match status" value="1"/>
</dbReference>
<dbReference type="InterPro" id="IPR004344">
    <property type="entry name" value="TTL/TTLL_fam"/>
</dbReference>
<dbReference type="PANTHER" id="PTHR12241">
    <property type="entry name" value="TUBULIN POLYGLUTAMYLASE"/>
    <property type="match status" value="1"/>
</dbReference>
<dbReference type="PANTHER" id="PTHR12241:SF154">
    <property type="entry name" value="TUBULIN POLYGLUTAMYLASE TTLL11"/>
    <property type="match status" value="1"/>
</dbReference>
<dbReference type="Pfam" id="PF03133">
    <property type="entry name" value="TTL"/>
    <property type="match status" value="1"/>
</dbReference>
<dbReference type="SUPFAM" id="SSF56059">
    <property type="entry name" value="Glutathione synthetase ATP-binding domain-like"/>
    <property type="match status" value="1"/>
</dbReference>
<dbReference type="PROSITE" id="PS51221">
    <property type="entry name" value="TTL"/>
    <property type="match status" value="1"/>
</dbReference>
<protein>
    <recommendedName>
        <fullName evidence="2">Tubulin polyglutamylase TTLL11</fullName>
        <ecNumber evidence="2">6.3.2.-</ecNumber>
    </recommendedName>
    <alternativeName>
        <fullName>Tubulin--tyrosine ligase-like protein 11</fullName>
    </alternativeName>
</protein>
<proteinExistence type="evidence at protein level"/>
<evidence type="ECO:0000250" key="1">
    <source>
        <dbReference type="UniProtKB" id="A4Q9E8"/>
    </source>
</evidence>
<evidence type="ECO:0000250" key="2">
    <source>
        <dbReference type="UniProtKB" id="A4Q9F4"/>
    </source>
</evidence>
<evidence type="ECO:0000250" key="3">
    <source>
        <dbReference type="UniProtKB" id="Q6ZT98"/>
    </source>
</evidence>
<evidence type="ECO:0000255" key="4">
    <source>
        <dbReference type="PROSITE-ProRule" id="PRU00568"/>
    </source>
</evidence>
<evidence type="ECO:0000256" key="5">
    <source>
        <dbReference type="SAM" id="MobiDB-lite"/>
    </source>
</evidence>
<evidence type="ECO:0000269" key="6">
    <source>
    </source>
</evidence>
<evidence type="ECO:0000269" key="7">
    <source>
    </source>
</evidence>
<evidence type="ECO:0000305" key="8"/>
<evidence type="ECO:0000312" key="9">
    <source>
        <dbReference type="HGNC" id="HGNC:18113"/>
    </source>
</evidence>
<feature type="chain" id="PRO_0000212445" description="Tubulin polyglutamylase TTLL11">
    <location>
        <begin position="1"/>
        <end position="710"/>
    </location>
</feature>
<feature type="domain" description="TTL" evidence="4">
    <location>
        <begin position="128"/>
        <end position="480"/>
    </location>
</feature>
<feature type="region of interest" description="Disordered" evidence="5">
    <location>
        <begin position="41"/>
        <end position="135"/>
    </location>
</feature>
<feature type="region of interest" description="c-MTBD region" evidence="7">
    <location>
        <begin position="467"/>
        <end position="538"/>
    </location>
</feature>
<feature type="region of interest" description="Disordered" evidence="5">
    <location>
        <begin position="665"/>
        <end position="710"/>
    </location>
</feature>
<feature type="compositionally biased region" description="Basic and acidic residues" evidence="5">
    <location>
        <begin position="51"/>
        <end position="60"/>
    </location>
</feature>
<feature type="compositionally biased region" description="Low complexity" evidence="5">
    <location>
        <begin position="64"/>
        <end position="82"/>
    </location>
</feature>
<feature type="compositionally biased region" description="Pro residues" evidence="5">
    <location>
        <begin position="83"/>
        <end position="93"/>
    </location>
</feature>
<feature type="compositionally biased region" description="Polar residues" evidence="5">
    <location>
        <begin position="123"/>
        <end position="135"/>
    </location>
</feature>
<feature type="binding site" evidence="1">
    <location>
        <position position="249"/>
    </location>
    <ligand>
        <name>ATP</name>
        <dbReference type="ChEBI" id="CHEBI:30616"/>
    </ligand>
</feature>
<feature type="binding site" evidence="1">
    <location>
        <begin position="255"/>
        <end position="256"/>
    </location>
    <ligand>
        <name>ATP</name>
        <dbReference type="ChEBI" id="CHEBI:30616"/>
    </ligand>
</feature>
<feature type="binding site" evidence="1">
    <location>
        <position position="255"/>
    </location>
    <ligand>
        <name>a protein</name>
        <dbReference type="ChEBI" id="CHEBI:16541"/>
    </ligand>
    <ligandPart>
        <name>L-glutamate residue</name>
        <dbReference type="ChEBI" id="CHEBI:29973"/>
        <note>L-glutamate acceptor residue in protein target</note>
    </ligandPart>
</feature>
<feature type="binding site" evidence="1">
    <location>
        <begin position="282"/>
        <end position="285"/>
    </location>
    <ligand>
        <name>ATP</name>
        <dbReference type="ChEBI" id="CHEBI:30616"/>
    </ligand>
</feature>
<feature type="binding site" evidence="1">
    <location>
        <begin position="295"/>
        <end position="297"/>
    </location>
    <ligand>
        <name>ATP</name>
        <dbReference type="ChEBI" id="CHEBI:30616"/>
    </ligand>
</feature>
<feature type="binding site" evidence="1">
    <location>
        <position position="321"/>
    </location>
    <ligand>
        <name>L-glutamate</name>
        <dbReference type="ChEBI" id="CHEBI:29985"/>
    </ligand>
</feature>
<feature type="binding site" evidence="1">
    <location>
        <begin position="343"/>
        <end position="344"/>
    </location>
    <ligand>
        <name>ATP</name>
        <dbReference type="ChEBI" id="CHEBI:30616"/>
    </ligand>
</feature>
<feature type="binding site" evidence="1">
    <location>
        <position position="345"/>
    </location>
    <ligand>
        <name>L-glutamate</name>
        <dbReference type="ChEBI" id="CHEBI:29985"/>
    </ligand>
</feature>
<feature type="binding site" evidence="1">
    <location>
        <position position="346"/>
    </location>
    <ligand>
        <name>L-glutamate</name>
        <dbReference type="ChEBI" id="CHEBI:29985"/>
    </ligand>
</feature>
<feature type="binding site" evidence="1">
    <location>
        <position position="365"/>
    </location>
    <ligand>
        <name>L-glutamate</name>
        <dbReference type="ChEBI" id="CHEBI:29985"/>
    </ligand>
</feature>
<feature type="binding site" evidence="1">
    <location>
        <position position="428"/>
    </location>
    <ligand>
        <name>Mg(2+)</name>
        <dbReference type="ChEBI" id="CHEBI:18420"/>
        <label>1</label>
    </ligand>
</feature>
<feature type="binding site" evidence="1">
    <location>
        <position position="441"/>
    </location>
    <ligand>
        <name>Mg(2+)</name>
        <dbReference type="ChEBI" id="CHEBI:18420"/>
        <label>1</label>
    </ligand>
</feature>
<feature type="binding site" evidence="1">
    <location>
        <position position="441"/>
    </location>
    <ligand>
        <name>Mg(2+)</name>
        <dbReference type="ChEBI" id="CHEBI:18420"/>
        <label>2</label>
    </ligand>
</feature>
<feature type="binding site" evidence="1">
    <location>
        <position position="443"/>
    </location>
    <ligand>
        <name>Mg(2+)</name>
        <dbReference type="ChEBI" id="CHEBI:18420"/>
        <label>2</label>
    </ligand>
</feature>
<feature type="binding site" evidence="1">
    <location>
        <position position="473"/>
    </location>
    <ligand>
        <name>L-glutamate</name>
        <dbReference type="ChEBI" id="CHEBI:29985"/>
    </ligand>
</feature>
<feature type="site" description="Essential for specifying alpha-elongation versus initiation step of the polyglutamylase activity" evidence="1">
    <location>
        <position position="255"/>
    </location>
</feature>
<feature type="splice variant" id="VSP_057853" description="In isoform 2.">
    <original>ILGFDILLMKNLKPILLEVNANPSM</original>
    <variation>VTIASSQPAFPALTGLKRALWLRVG</variation>
    <location>
        <begin position="424"/>
        <end position="448"/>
    </location>
</feature>
<feature type="splice variant" id="VSP_057854" description="In isoform 2.">
    <location>
        <begin position="449"/>
        <end position="710"/>
    </location>
</feature>
<feature type="mutagenesis site" description="Decreased binding to microtubules and polyglutamylase activity; when associated with E-326 and E-329." evidence="7">
    <original>KKKR</original>
    <variation>EEEE</variation>
    <location>
        <begin position="488"/>
        <end position="491"/>
    </location>
</feature>
<accession>Q8NHH1</accession>
<accession>A0A8I5KQZ2</accession>
<accession>F8W6M1</accession>
<reference key="1">
    <citation type="submission" date="2002-06" db="EMBL/GenBank/DDBJ databases">
        <authorList>
            <person name="Guo J.H."/>
            <person name="Yu L."/>
        </authorList>
    </citation>
    <scope>NUCLEOTIDE SEQUENCE [LARGE SCALE MRNA] (ISOFORM 2)</scope>
    <source>
        <tissue>Brain</tissue>
    </source>
</reference>
<reference key="2">
    <citation type="journal article" date="2004" name="Nature">
        <title>DNA sequence and analysis of human chromosome 9.</title>
        <authorList>
            <person name="Humphray S.J."/>
            <person name="Oliver K."/>
            <person name="Hunt A.R."/>
            <person name="Plumb R.W."/>
            <person name="Loveland J.E."/>
            <person name="Howe K.L."/>
            <person name="Andrews T.D."/>
            <person name="Searle S."/>
            <person name="Hunt S.E."/>
            <person name="Scott C.E."/>
            <person name="Jones M.C."/>
            <person name="Ainscough R."/>
            <person name="Almeida J.P."/>
            <person name="Ambrose K.D."/>
            <person name="Ashwell R.I.S."/>
            <person name="Babbage A.K."/>
            <person name="Babbage S."/>
            <person name="Bagguley C.L."/>
            <person name="Bailey J."/>
            <person name="Banerjee R."/>
            <person name="Barker D.J."/>
            <person name="Barlow K.F."/>
            <person name="Bates K."/>
            <person name="Beasley H."/>
            <person name="Beasley O."/>
            <person name="Bird C.P."/>
            <person name="Bray-Allen S."/>
            <person name="Brown A.J."/>
            <person name="Brown J.Y."/>
            <person name="Burford D."/>
            <person name="Burrill W."/>
            <person name="Burton J."/>
            <person name="Carder C."/>
            <person name="Carter N.P."/>
            <person name="Chapman J.C."/>
            <person name="Chen Y."/>
            <person name="Clarke G."/>
            <person name="Clark S.Y."/>
            <person name="Clee C.M."/>
            <person name="Clegg S."/>
            <person name="Collier R.E."/>
            <person name="Corby N."/>
            <person name="Crosier M."/>
            <person name="Cummings A.T."/>
            <person name="Davies J."/>
            <person name="Dhami P."/>
            <person name="Dunn M."/>
            <person name="Dutta I."/>
            <person name="Dyer L.W."/>
            <person name="Earthrowl M.E."/>
            <person name="Faulkner L."/>
            <person name="Fleming C.J."/>
            <person name="Frankish A."/>
            <person name="Frankland J.A."/>
            <person name="French L."/>
            <person name="Fricker D.G."/>
            <person name="Garner P."/>
            <person name="Garnett J."/>
            <person name="Ghori J."/>
            <person name="Gilbert J.G.R."/>
            <person name="Glison C."/>
            <person name="Grafham D.V."/>
            <person name="Gribble S."/>
            <person name="Griffiths C."/>
            <person name="Griffiths-Jones S."/>
            <person name="Grocock R."/>
            <person name="Guy J."/>
            <person name="Hall R.E."/>
            <person name="Hammond S."/>
            <person name="Harley J.L."/>
            <person name="Harrison E.S.I."/>
            <person name="Hart E.A."/>
            <person name="Heath P.D."/>
            <person name="Henderson C.D."/>
            <person name="Hopkins B.L."/>
            <person name="Howard P.J."/>
            <person name="Howden P.J."/>
            <person name="Huckle E."/>
            <person name="Johnson C."/>
            <person name="Johnson D."/>
            <person name="Joy A.A."/>
            <person name="Kay M."/>
            <person name="Keenan S."/>
            <person name="Kershaw J.K."/>
            <person name="Kimberley A.M."/>
            <person name="King A."/>
            <person name="Knights A."/>
            <person name="Laird G.K."/>
            <person name="Langford C."/>
            <person name="Lawlor S."/>
            <person name="Leongamornlert D.A."/>
            <person name="Leversha M."/>
            <person name="Lloyd C."/>
            <person name="Lloyd D.M."/>
            <person name="Lovell J."/>
            <person name="Martin S."/>
            <person name="Mashreghi-Mohammadi M."/>
            <person name="Matthews L."/>
            <person name="McLaren S."/>
            <person name="McLay K.E."/>
            <person name="McMurray A."/>
            <person name="Milne S."/>
            <person name="Nickerson T."/>
            <person name="Nisbett J."/>
            <person name="Nordsiek G."/>
            <person name="Pearce A.V."/>
            <person name="Peck A.I."/>
            <person name="Porter K.M."/>
            <person name="Pandian R."/>
            <person name="Pelan S."/>
            <person name="Phillimore B."/>
            <person name="Povey S."/>
            <person name="Ramsey Y."/>
            <person name="Rand V."/>
            <person name="Scharfe M."/>
            <person name="Sehra H.K."/>
            <person name="Shownkeen R."/>
            <person name="Sims S.K."/>
            <person name="Skuce C.D."/>
            <person name="Smith M."/>
            <person name="Steward C.A."/>
            <person name="Swarbreck D."/>
            <person name="Sycamore N."/>
            <person name="Tester J."/>
            <person name="Thorpe A."/>
            <person name="Tracey A."/>
            <person name="Tromans A."/>
            <person name="Thomas D.W."/>
            <person name="Wall M."/>
            <person name="Wallis J.M."/>
            <person name="West A.P."/>
            <person name="Whitehead S.L."/>
            <person name="Willey D.L."/>
            <person name="Williams S.A."/>
            <person name="Wilming L."/>
            <person name="Wray P.W."/>
            <person name="Young L."/>
            <person name="Ashurst J.L."/>
            <person name="Coulson A."/>
            <person name="Blocker H."/>
            <person name="Durbin R.M."/>
            <person name="Sulston J.E."/>
            <person name="Hubbard T."/>
            <person name="Jackson M.J."/>
            <person name="Bentley D.R."/>
            <person name="Beck S."/>
            <person name="Rogers J."/>
            <person name="Dunham I."/>
        </authorList>
    </citation>
    <scope>NUCLEOTIDE SEQUENCE [LARGE SCALE GENOMIC DNA]</scope>
</reference>
<reference key="3">
    <citation type="journal article" date="2012" name="Mol. Biol. Cell">
        <title>CSAP localizes to polyglutamylated microtubules and promotes proper cilia function and zebrafish development.</title>
        <authorList>
            <person name="Backer C.B."/>
            <person name="Gutzman J.H."/>
            <person name="Pearson C.G."/>
            <person name="Cheeseman I.M."/>
        </authorList>
    </citation>
    <scope>FUNCTION</scope>
</reference>
<reference key="4">
    <citation type="journal article" date="2015" name="Cell">
        <title>Multivalent microtubule recognition by tubulin tyrosine ligase-like family glutamylases.</title>
        <authorList>
            <person name="Garnham C.P."/>
            <person name="Vemu A."/>
            <person name="Wilson-Kubalek E.M."/>
            <person name="Yu I."/>
            <person name="Szyk A."/>
            <person name="Lander G.C."/>
            <person name="Milligan R.A."/>
            <person name="Roll-Mecak A."/>
        </authorList>
    </citation>
    <scope>DOMAIN</scope>
    <scope>MUTAGENESIS OF 488-LYS--ARG-491</scope>
</reference>
<name>TTL11_HUMAN</name>